<accession>P0DO27</accession>
<accession>Q9FWE1</accession>
<keyword id="KW-1003">Cell membrane</keyword>
<keyword id="KW-0217">Developmental protein</keyword>
<keyword id="KW-0472">Membrane</keyword>
<keyword id="KW-0812">Transmembrane</keyword>
<keyword id="KW-1133">Transmembrane helix</keyword>
<sequence>MRQCASASSSTSRPPEAAGEEGKRRRRRRGWLLQAAAREQRSRFYIFRRCVAMLLCWYKYRNITPYNVVPLGIYGLVWFATMPKYWQCQTIGKF</sequence>
<organism>
    <name type="scientific">Oryza sativa subsp. japonica</name>
    <name type="common">Rice</name>
    <dbReference type="NCBI Taxonomy" id="39947"/>
    <lineage>
        <taxon>Eukaryota</taxon>
        <taxon>Viridiplantae</taxon>
        <taxon>Streptophyta</taxon>
        <taxon>Embryophyta</taxon>
        <taxon>Tracheophyta</taxon>
        <taxon>Spermatophyta</taxon>
        <taxon>Magnoliopsida</taxon>
        <taxon>Liliopsida</taxon>
        <taxon>Poales</taxon>
        <taxon>Poaceae</taxon>
        <taxon>BOP clade</taxon>
        <taxon>Oryzoideae</taxon>
        <taxon>Oryzeae</taxon>
        <taxon>Oryzinae</taxon>
        <taxon>Oryza</taxon>
        <taxon>Oryza sativa</taxon>
    </lineage>
</organism>
<feature type="chain" id="PRO_0000452793" description="Small polypeptide ROTUNDIFOLIA LIKE 1">
    <location>
        <begin position="1"/>
        <end position="94"/>
    </location>
</feature>
<feature type="transmembrane region" description="Helical" evidence="3">
    <location>
        <begin position="63"/>
        <end position="82"/>
    </location>
</feature>
<feature type="region of interest" description="Disordered" evidence="4">
    <location>
        <begin position="1"/>
        <end position="26"/>
    </location>
</feature>
<feature type="region of interest" description="Required for DVL/RTFL small polypeptide activity" evidence="2">
    <location>
        <begin position="28"/>
        <end position="59"/>
    </location>
</feature>
<feature type="compositionally biased region" description="Polar residues" evidence="4">
    <location>
        <begin position="1"/>
        <end position="13"/>
    </location>
</feature>
<proteinExistence type="inferred from homology"/>
<gene>
    <name evidence="6" type="primary">RTFL1</name>
    <name evidence="8" type="ORF">OSJNBb0015I11.21</name>
</gene>
<protein>
    <recommendedName>
        <fullName evidence="6">Small polypeptide ROTUNDIFOLIA LIKE 1</fullName>
        <shortName evidence="6">OsRTFL1</shortName>
        <shortName evidence="6">Small polypeptide ROT-FOUR-LIKE 1</shortName>
    </recommendedName>
</protein>
<name>RTFL1_ORYSJ</name>
<reference key="1">
    <citation type="journal article" date="2005" name="Nature">
        <title>The map-based sequence of the rice genome.</title>
        <authorList>
            <consortium name="International rice genome sequencing project (IRGSP)"/>
        </authorList>
    </citation>
    <scope>NUCLEOTIDE SEQUENCE [LARGE SCALE GENOMIC DNA]</scope>
    <source>
        <strain>cv. Nipponbare</strain>
    </source>
</reference>
<reference key="2">
    <citation type="journal article" date="2008" name="Nucleic Acids Res.">
        <title>The rice annotation project database (RAP-DB): 2008 update.</title>
        <authorList>
            <consortium name="The rice annotation project (RAP)"/>
        </authorList>
    </citation>
    <scope>GENOME REANNOTATION</scope>
    <source>
        <strain>cv. Nipponbare</strain>
    </source>
</reference>
<reference key="3">
    <citation type="journal article" date="2004" name="Plant J.">
        <title>Overexpression of a novel small peptide ROTUNDIFOLIA4 decreases cell proliferation and alters leaf shape in Arabidopsis thaliana.</title>
        <authorList>
            <person name="Narita N.N."/>
            <person name="Moore S."/>
            <person name="Horiguchi G."/>
            <person name="Kubo M."/>
            <person name="Demura T."/>
            <person name="Fukuda H."/>
            <person name="Goodrich J."/>
            <person name="Tsukaya H."/>
        </authorList>
    </citation>
    <scope>DISRUPTION PHENOTYPE</scope>
    <scope>GENE FAMILY</scope>
</reference>
<reference key="4">
    <citation type="journal article" date="2015" name="J. Plant Res.">
        <title>Comparative analysis of the RTFL peptide family on the control of plant organogenesis.</title>
        <authorList>
            <person name="Guo P."/>
            <person name="Yoshimura A."/>
            <person name="Ishikawa N."/>
            <person name="Yamaguchi T."/>
            <person name="Guo Y."/>
            <person name="Tsukaya H."/>
        </authorList>
    </citation>
    <scope>REVIEW</scope>
    <scope>GENE FAMILY</scope>
    <scope>NOMENCLATURE</scope>
    <source>
        <strain>cv. Taichung 65</strain>
    </source>
</reference>
<comment type="function">
    <text evidence="1">Small polypeptide acting as a regulatory molecule which coordinates cellular responses required for differentiation, growth and development, probably by restricting polar cell proliferation in lateral organs.</text>
</comment>
<comment type="subcellular location">
    <subcellularLocation>
        <location evidence="2">Cell membrane</location>
        <topology evidence="3">Single-pass membrane protein</topology>
    </subcellularLocation>
</comment>
<comment type="disruption phenotype">
    <text evidence="5">No visible phenotype.</text>
</comment>
<comment type="similarity">
    <text evidence="7">Belongs to the DVL/RTFL small polypeptides family.</text>
</comment>
<comment type="sequence caution" evidence="7">
    <conflict type="erroneous gene model prediction">
        <sequence resource="EMBL-CDS" id="AAG13585"/>
    </conflict>
    <text>The predicted gene has been split into 2 genes.</text>
</comment>
<evidence type="ECO:0000250" key="1">
    <source>
        <dbReference type="UniProtKB" id="A0A5S6RB44"/>
    </source>
</evidence>
<evidence type="ECO:0000250" key="2">
    <source>
        <dbReference type="UniProtKB" id="Q7XXN8"/>
    </source>
</evidence>
<evidence type="ECO:0000255" key="3"/>
<evidence type="ECO:0000256" key="4">
    <source>
        <dbReference type="SAM" id="MobiDB-lite"/>
    </source>
</evidence>
<evidence type="ECO:0000269" key="5">
    <source>
    </source>
</evidence>
<evidence type="ECO:0000303" key="6">
    <source>
    </source>
</evidence>
<evidence type="ECO:0000305" key="7"/>
<evidence type="ECO:0000312" key="8">
    <source>
        <dbReference type="EMBL" id="AAG13585.1"/>
    </source>
</evidence>
<dbReference type="EMBL" id="AC051633">
    <property type="protein sequence ID" value="AAG13585.1"/>
    <property type="status" value="ALT_SEQ"/>
    <property type="molecule type" value="Genomic_DNA"/>
</dbReference>
<dbReference type="Proteomes" id="UP000000763">
    <property type="component" value="Chromosome 10"/>
</dbReference>
<dbReference type="GO" id="GO:0005886">
    <property type="term" value="C:plasma membrane"/>
    <property type="evidence" value="ECO:0007669"/>
    <property type="project" value="UniProtKB-SubCell"/>
</dbReference>
<dbReference type="GO" id="GO:0008285">
    <property type="term" value="P:negative regulation of cell population proliferation"/>
    <property type="evidence" value="ECO:0007669"/>
    <property type="project" value="InterPro"/>
</dbReference>
<dbReference type="GO" id="GO:0048367">
    <property type="term" value="P:shoot system development"/>
    <property type="evidence" value="ECO:0007669"/>
    <property type="project" value="UniProtKB-ARBA"/>
</dbReference>
<dbReference type="InterPro" id="IPR012552">
    <property type="entry name" value="DVL"/>
</dbReference>
<dbReference type="InterPro" id="IPR051525">
    <property type="entry name" value="DVL_RTFL_regulatory"/>
</dbReference>
<dbReference type="PANTHER" id="PTHR33102">
    <property type="entry name" value="DVL19-RELATED-RELATED"/>
    <property type="match status" value="1"/>
</dbReference>
<dbReference type="Pfam" id="PF08137">
    <property type="entry name" value="DVL"/>
    <property type="match status" value="1"/>
</dbReference>